<feature type="chain" id="PRO_1000134817" description="Probable protein kinase UbiB">
    <location>
        <begin position="1"/>
        <end position="546"/>
    </location>
</feature>
<feature type="transmembrane region" description="Helical" evidence="1">
    <location>
        <begin position="501"/>
        <end position="521"/>
    </location>
</feature>
<feature type="transmembrane region" description="Helical" evidence="1">
    <location>
        <begin position="522"/>
        <end position="542"/>
    </location>
</feature>
<feature type="domain" description="Protein kinase" evidence="1">
    <location>
        <begin position="124"/>
        <end position="502"/>
    </location>
</feature>
<feature type="active site" description="Proton acceptor" evidence="1">
    <location>
        <position position="288"/>
    </location>
</feature>
<feature type="binding site" evidence="1">
    <location>
        <begin position="130"/>
        <end position="138"/>
    </location>
    <ligand>
        <name>ATP</name>
        <dbReference type="ChEBI" id="CHEBI:30616"/>
    </ligand>
</feature>
<feature type="binding site" evidence="1">
    <location>
        <position position="153"/>
    </location>
    <ligand>
        <name>ATP</name>
        <dbReference type="ChEBI" id="CHEBI:30616"/>
    </ligand>
</feature>
<organism>
    <name type="scientific">Escherichia coli O81 (strain ED1a)</name>
    <dbReference type="NCBI Taxonomy" id="585397"/>
    <lineage>
        <taxon>Bacteria</taxon>
        <taxon>Pseudomonadati</taxon>
        <taxon>Pseudomonadota</taxon>
        <taxon>Gammaproteobacteria</taxon>
        <taxon>Enterobacterales</taxon>
        <taxon>Enterobacteriaceae</taxon>
        <taxon>Escherichia</taxon>
    </lineage>
</organism>
<name>UBIB_ECO81</name>
<reference key="1">
    <citation type="journal article" date="2009" name="PLoS Genet.">
        <title>Organised genome dynamics in the Escherichia coli species results in highly diverse adaptive paths.</title>
        <authorList>
            <person name="Touchon M."/>
            <person name="Hoede C."/>
            <person name="Tenaillon O."/>
            <person name="Barbe V."/>
            <person name="Baeriswyl S."/>
            <person name="Bidet P."/>
            <person name="Bingen E."/>
            <person name="Bonacorsi S."/>
            <person name="Bouchier C."/>
            <person name="Bouvet O."/>
            <person name="Calteau A."/>
            <person name="Chiapello H."/>
            <person name="Clermont O."/>
            <person name="Cruveiller S."/>
            <person name="Danchin A."/>
            <person name="Diard M."/>
            <person name="Dossat C."/>
            <person name="Karoui M.E."/>
            <person name="Frapy E."/>
            <person name="Garry L."/>
            <person name="Ghigo J.M."/>
            <person name="Gilles A.M."/>
            <person name="Johnson J."/>
            <person name="Le Bouguenec C."/>
            <person name="Lescat M."/>
            <person name="Mangenot S."/>
            <person name="Martinez-Jehanne V."/>
            <person name="Matic I."/>
            <person name="Nassif X."/>
            <person name="Oztas S."/>
            <person name="Petit M.A."/>
            <person name="Pichon C."/>
            <person name="Rouy Z."/>
            <person name="Ruf C.S."/>
            <person name="Schneider D."/>
            <person name="Tourret J."/>
            <person name="Vacherie B."/>
            <person name="Vallenet D."/>
            <person name="Medigue C."/>
            <person name="Rocha E.P.C."/>
            <person name="Denamur E."/>
        </authorList>
    </citation>
    <scope>NUCLEOTIDE SEQUENCE [LARGE SCALE GENOMIC DNA]</scope>
    <source>
        <strain>ED1a</strain>
    </source>
</reference>
<evidence type="ECO:0000255" key="1">
    <source>
        <dbReference type="HAMAP-Rule" id="MF_00414"/>
    </source>
</evidence>
<dbReference type="EC" id="2.7.-.-" evidence="1"/>
<dbReference type="EMBL" id="CU928162">
    <property type="protein sequence ID" value="CAR10514.1"/>
    <property type="molecule type" value="Genomic_DNA"/>
</dbReference>
<dbReference type="RefSeq" id="WP_000187545.1">
    <property type="nucleotide sequence ID" value="NC_011745.1"/>
</dbReference>
<dbReference type="SMR" id="B7N2E3"/>
<dbReference type="KEGG" id="ecq:ECED1_4539"/>
<dbReference type="HOGENOM" id="CLU_006533_0_0_6"/>
<dbReference type="UniPathway" id="UPA00232"/>
<dbReference type="Proteomes" id="UP000000748">
    <property type="component" value="Chromosome"/>
</dbReference>
<dbReference type="GO" id="GO:0005886">
    <property type="term" value="C:plasma membrane"/>
    <property type="evidence" value="ECO:0007669"/>
    <property type="project" value="UniProtKB-SubCell"/>
</dbReference>
<dbReference type="GO" id="GO:0005524">
    <property type="term" value="F:ATP binding"/>
    <property type="evidence" value="ECO:0007669"/>
    <property type="project" value="UniProtKB-KW"/>
</dbReference>
<dbReference type="GO" id="GO:0004672">
    <property type="term" value="F:protein kinase activity"/>
    <property type="evidence" value="ECO:0007669"/>
    <property type="project" value="UniProtKB-UniRule"/>
</dbReference>
<dbReference type="GO" id="GO:0010795">
    <property type="term" value="P:regulation of ubiquinone biosynthetic process"/>
    <property type="evidence" value="ECO:0007669"/>
    <property type="project" value="UniProtKB-UniRule"/>
</dbReference>
<dbReference type="GO" id="GO:0006744">
    <property type="term" value="P:ubiquinone biosynthetic process"/>
    <property type="evidence" value="ECO:0007669"/>
    <property type="project" value="UniProtKB-UniPathway"/>
</dbReference>
<dbReference type="CDD" id="cd13972">
    <property type="entry name" value="UbiB"/>
    <property type="match status" value="1"/>
</dbReference>
<dbReference type="HAMAP" id="MF_00414">
    <property type="entry name" value="UbiB"/>
    <property type="match status" value="1"/>
</dbReference>
<dbReference type="InterPro" id="IPR004147">
    <property type="entry name" value="ABC1_dom"/>
</dbReference>
<dbReference type="InterPro" id="IPR011009">
    <property type="entry name" value="Kinase-like_dom_sf"/>
</dbReference>
<dbReference type="InterPro" id="IPR010232">
    <property type="entry name" value="UbiB"/>
</dbReference>
<dbReference type="InterPro" id="IPR045308">
    <property type="entry name" value="UbiB_bact"/>
</dbReference>
<dbReference type="InterPro" id="IPR050154">
    <property type="entry name" value="UbiB_kinase"/>
</dbReference>
<dbReference type="NCBIfam" id="NF003404">
    <property type="entry name" value="PRK04750.1"/>
    <property type="match status" value="1"/>
</dbReference>
<dbReference type="NCBIfam" id="TIGR01982">
    <property type="entry name" value="UbiB"/>
    <property type="match status" value="1"/>
</dbReference>
<dbReference type="PANTHER" id="PTHR10566">
    <property type="entry name" value="CHAPERONE-ACTIVITY OF BC1 COMPLEX CABC1 -RELATED"/>
    <property type="match status" value="1"/>
</dbReference>
<dbReference type="PANTHER" id="PTHR10566:SF113">
    <property type="entry name" value="PROTEIN ACTIVITY OF BC1 COMPLEX KINASE 7, CHLOROPLASTIC"/>
    <property type="match status" value="1"/>
</dbReference>
<dbReference type="Pfam" id="PF03109">
    <property type="entry name" value="ABC1"/>
    <property type="match status" value="1"/>
</dbReference>
<dbReference type="SUPFAM" id="SSF56112">
    <property type="entry name" value="Protein kinase-like (PK-like)"/>
    <property type="match status" value="1"/>
</dbReference>
<proteinExistence type="inferred from homology"/>
<sequence>MTPGEVRRLYFIIRTFLSYGLDELIPKMRITLPLRLWRYSLFWMPNRHKDKPLGERLRLALQELGPVWIKFGQMLSTRRDLFPPHIADQLALLQDKVAPFDGKLAKQQIEAAMGGLPVEAWFDDFEIKPLASASIAQVHTARLKSNGKEVVIKVIRPDILPVIKADLKLIYRLARWVPRLLPDGRRLRPTEVVREYEKTLIDELNLLRESANAIQLRRNFEDSPMLYIPEVYPDYCSEGMMVMERIYGIPVSDVATLEKNGTNMKLLAERGVQVFFTQVFRDSFFHADMHPGNIFVSYEHPENPKYIGIDCGIVGSLNKEDKRYLAENFIAFFNRDYRKVAELHVDSGWVPPDTNVEEFEFAIRTVCEPIFEKPLAEISFGHVLLNLFNTARRFNMEVQPQLVLLQKTLLYVEGVGRQLYPQLDLWKTAKPFLESWIKDQVGIPALVRAFKEKAPFWVEKMPELPELVYDSLRQGKYLQHSVDKIARELQSNHVRQGQSRYFLGIGATLVLSGTFLLVSRPEWGLMPGWLMAGGLIAWFVGWRKTR</sequence>
<keyword id="KW-0067">ATP-binding</keyword>
<keyword id="KW-0997">Cell inner membrane</keyword>
<keyword id="KW-1003">Cell membrane</keyword>
<keyword id="KW-0418">Kinase</keyword>
<keyword id="KW-0472">Membrane</keyword>
<keyword id="KW-0547">Nucleotide-binding</keyword>
<keyword id="KW-0808">Transferase</keyword>
<keyword id="KW-0812">Transmembrane</keyword>
<keyword id="KW-1133">Transmembrane helix</keyword>
<keyword id="KW-0831">Ubiquinone biosynthesis</keyword>
<protein>
    <recommendedName>
        <fullName evidence="1">Probable protein kinase UbiB</fullName>
        <ecNumber evidence="1">2.7.-.-</ecNumber>
    </recommendedName>
    <alternativeName>
        <fullName evidence="1">Ubiquinone biosynthesis protein UbiB</fullName>
    </alternativeName>
</protein>
<comment type="function">
    <text evidence="1">Is probably a protein kinase regulator of UbiI activity which is involved in aerobic coenzyme Q (ubiquinone) biosynthesis.</text>
</comment>
<comment type="pathway">
    <text>Cofactor biosynthesis; ubiquinone biosynthesis [regulation].</text>
</comment>
<comment type="subcellular location">
    <subcellularLocation>
        <location evidence="1">Cell inner membrane</location>
        <topology evidence="1">Multi-pass membrane protein</topology>
    </subcellularLocation>
</comment>
<comment type="similarity">
    <text evidence="1">Belongs to the ABC1 family. UbiB subfamily.</text>
</comment>
<gene>
    <name evidence="1" type="primary">ubiB</name>
    <name type="ordered locus">ECED1_4539</name>
</gene>
<accession>B7N2E3</accession>